<name>ARHGG_HUMAN</name>
<evidence type="ECO:0000250" key="1">
    <source>
        <dbReference type="UniProtKB" id="Q3U5C8"/>
    </source>
</evidence>
<evidence type="ECO:0000255" key="2">
    <source>
        <dbReference type="PROSITE-ProRule" id="PRU00062"/>
    </source>
</evidence>
<evidence type="ECO:0000255" key="3">
    <source>
        <dbReference type="PROSITE-ProRule" id="PRU00145"/>
    </source>
</evidence>
<evidence type="ECO:0000255" key="4">
    <source>
        <dbReference type="PROSITE-ProRule" id="PRU00192"/>
    </source>
</evidence>
<evidence type="ECO:0000256" key="5">
    <source>
        <dbReference type="SAM" id="MobiDB-lite"/>
    </source>
</evidence>
<evidence type="ECO:0000269" key="6">
    <source>
    </source>
</evidence>
<evidence type="ECO:0000269" key="7">
    <source>
    </source>
</evidence>
<evidence type="ECO:0000269" key="8">
    <source>
    </source>
</evidence>
<evidence type="ECO:0000269" key="9">
    <source>
    </source>
</evidence>
<evidence type="ECO:0000269" key="10">
    <source ref="1"/>
</evidence>
<evidence type="ECO:0000269" key="11">
    <source ref="2"/>
</evidence>
<evidence type="ECO:0000303" key="12">
    <source>
    </source>
</evidence>
<evidence type="ECO:0000303" key="13">
    <source ref="1"/>
</evidence>
<evidence type="ECO:0000303" key="14">
    <source ref="2"/>
</evidence>
<evidence type="ECO:0000305" key="15"/>
<evidence type="ECO:0007744" key="16">
    <source>
    </source>
</evidence>
<evidence type="ECO:0007744" key="17">
    <source>
    </source>
</evidence>
<evidence type="ECO:0007744" key="18">
    <source>
    </source>
</evidence>
<evidence type="ECO:0007744" key="19">
    <source>
    </source>
</evidence>
<evidence type="ECO:0007744" key="20">
    <source>
    </source>
</evidence>
<evidence type="ECO:0007829" key="21">
    <source>
        <dbReference type="PDB" id="1X6B"/>
    </source>
</evidence>
<protein>
    <recommendedName>
        <fullName>Rho guanine nucleotide exchange factor 16</fullName>
    </recommendedName>
    <alternativeName>
        <fullName>Ephexin-4</fullName>
    </alternativeName>
</protein>
<keyword id="KW-0002">3D-structure</keyword>
<keyword id="KW-0007">Acetylation</keyword>
<keyword id="KW-0025">Alternative splicing</keyword>
<keyword id="KW-0963">Cytoplasm</keyword>
<keyword id="KW-0344">Guanine-nucleotide releasing factor</keyword>
<keyword id="KW-0597">Phosphoprotein</keyword>
<keyword id="KW-1267">Proteomics identification</keyword>
<keyword id="KW-1185">Reference proteome</keyword>
<keyword id="KW-0728">SH3 domain</keyword>
<gene>
    <name type="primary">ARHGEF16</name>
    <name type="synonym">EPHEXIN4</name>
    <name type="synonym">NBR</name>
</gene>
<organism>
    <name type="scientific">Homo sapiens</name>
    <name type="common">Human</name>
    <dbReference type="NCBI Taxonomy" id="9606"/>
    <lineage>
        <taxon>Eukaryota</taxon>
        <taxon>Metazoa</taxon>
        <taxon>Chordata</taxon>
        <taxon>Craniata</taxon>
        <taxon>Vertebrata</taxon>
        <taxon>Euteleostomi</taxon>
        <taxon>Mammalia</taxon>
        <taxon>Eutheria</taxon>
        <taxon>Euarchontoglires</taxon>
        <taxon>Primates</taxon>
        <taxon>Haplorrhini</taxon>
        <taxon>Catarrhini</taxon>
        <taxon>Hominidae</taxon>
        <taxon>Homo</taxon>
    </lineage>
</organism>
<accession>Q5VV41</accession>
<accession>Q86TF0</accession>
<accession>Q99434</accession>
<sequence length="709" mass="80105">MAQRHSDSSLEEKLLGHRFHSELRLDAGGNPASGLPMVRGSPRVRDDAAFQPQVPAPPQPRPPGHEEPWPIVLSTESPAALKLGTQQLIPKSLAVASKAKTPARHQSFGAAVLSREAARRDPKLLPAPSFSLDDMDVDKDPGGMLRRNLRNQSYRAAMKGLGKPGGQGDAIQLSPKLQALAEEPSQPHTRSPAKNKKTLGRKRGHKGSFKDDPQLYQEIQERGLNTSQESDDDILDESSSPEGTQKVDATIVVKSYRPAQVTWSQLPEVVELGILDQLSTEERKRQEAMFEILTSEFSYQHSLSILVEEFLQSKELRATVTQMEHHHLFSNILDVLGASQRFFEDLEQRHKAQVLVEDISDILEEHAEKHFHPYIAYCSNEVYQQRTLQKLISSNAAFREALREIERRPACGGLPMLSFLILPMQRVTRLPLLMDTLCLKTQGHSERYKAASRALKAISKLVRQCNEGAHRMERMEQMYTLHTQLDFSKVKSLPLISASRWLLKRGELFLVEETGLFRKIASRPTCYLFLFNDVLVVTKKKSEESYMVQDYAQMNHIQVEKIEPSELPLPGGGNRSSSVPHPFQVTLLRNSEGRQEQLLLSSDSASDRARWIVALTHSERQWQGLSSKGDLPQVEITKAFFAKQADEVTLQQADVVLVLQQEDGWLYGERLRDGETGWFPEDFARFITSRVAVEGNVRRMERLRVETDV</sequence>
<dbReference type="EMBL" id="D89016">
    <property type="protein sequence ID" value="BAA13745.1"/>
    <property type="molecule type" value="mRNA"/>
</dbReference>
<dbReference type="EMBL" id="BT007270">
    <property type="protein sequence ID" value="AAP35934.1"/>
    <property type="molecule type" value="mRNA"/>
</dbReference>
<dbReference type="EMBL" id="AL512413">
    <property type="status" value="NOT_ANNOTATED_CDS"/>
    <property type="molecule type" value="Genomic_DNA"/>
</dbReference>
<dbReference type="EMBL" id="BC002681">
    <property type="protein sequence ID" value="AAH02681.1"/>
    <property type="status" value="ALT_INIT"/>
    <property type="molecule type" value="mRNA"/>
</dbReference>
<dbReference type="EMBL" id="BC051838">
    <property type="protein sequence ID" value="AAH51838.1"/>
    <property type="molecule type" value="mRNA"/>
</dbReference>
<dbReference type="CCDS" id="CCDS46.2">
    <molecule id="Q5VV41-1"/>
</dbReference>
<dbReference type="RefSeq" id="NP_055263.2">
    <molecule id="Q5VV41-1"/>
    <property type="nucleotide sequence ID" value="NM_014448.4"/>
</dbReference>
<dbReference type="RefSeq" id="XP_016856539.1">
    <property type="nucleotide sequence ID" value="XM_017001050.1"/>
</dbReference>
<dbReference type="RefSeq" id="XP_016856540.1">
    <molecule id="Q5VV41-1"/>
    <property type="nucleotide sequence ID" value="XM_017001051.2"/>
</dbReference>
<dbReference type="RefSeq" id="XP_024302222.1">
    <molecule id="Q5VV41-2"/>
    <property type="nucleotide sequence ID" value="XM_024446454.2"/>
</dbReference>
<dbReference type="RefSeq" id="XP_024302223.1">
    <molecule id="Q5VV41-2"/>
    <property type="nucleotide sequence ID" value="XM_024446455.2"/>
</dbReference>
<dbReference type="PDB" id="1X6B">
    <property type="method" value="NMR"/>
    <property type="chains" value="A=622-687"/>
</dbReference>
<dbReference type="PDBsum" id="1X6B"/>
<dbReference type="BMRB" id="Q5VV41"/>
<dbReference type="SMR" id="Q5VV41"/>
<dbReference type="BioGRID" id="118085">
    <property type="interactions" value="101"/>
</dbReference>
<dbReference type="FunCoup" id="Q5VV41">
    <property type="interactions" value="607"/>
</dbReference>
<dbReference type="IntAct" id="Q5VV41">
    <property type="interactions" value="44"/>
</dbReference>
<dbReference type="MINT" id="Q5VV41"/>
<dbReference type="STRING" id="9606.ENSP00000367629"/>
<dbReference type="GlyGen" id="Q5VV41">
    <property type="glycosylation" value="1 site, 1 O-linked glycan (1 site)"/>
</dbReference>
<dbReference type="iPTMnet" id="Q5VV41"/>
<dbReference type="PhosphoSitePlus" id="Q5VV41"/>
<dbReference type="BioMuta" id="ARHGEF16"/>
<dbReference type="DMDM" id="74747198"/>
<dbReference type="jPOST" id="Q5VV41"/>
<dbReference type="MassIVE" id="Q5VV41"/>
<dbReference type="PaxDb" id="9606-ENSP00000367629"/>
<dbReference type="PeptideAtlas" id="Q5VV41"/>
<dbReference type="ProteomicsDB" id="65436">
    <molecule id="Q5VV41-1"/>
</dbReference>
<dbReference type="ProteomicsDB" id="65437">
    <molecule id="Q5VV41-2"/>
</dbReference>
<dbReference type="Pumba" id="Q5VV41"/>
<dbReference type="ABCD" id="Q5VV41">
    <property type="antibodies" value="7 sequenced antibodies"/>
</dbReference>
<dbReference type="Antibodypedia" id="1622">
    <property type="antibodies" value="125 antibodies from 26 providers"/>
</dbReference>
<dbReference type="DNASU" id="27237"/>
<dbReference type="Ensembl" id="ENST00000378371.6">
    <molecule id="Q5VV41-2"/>
    <property type="protein sequence ID" value="ENSP00000367622.2"/>
    <property type="gene ID" value="ENSG00000130762.15"/>
</dbReference>
<dbReference type="Ensembl" id="ENST00000378373.5">
    <molecule id="Q5VV41-2"/>
    <property type="protein sequence ID" value="ENSP00000367624.1"/>
    <property type="gene ID" value="ENSG00000130762.15"/>
</dbReference>
<dbReference type="Ensembl" id="ENST00000378378.9">
    <molecule id="Q5VV41-1"/>
    <property type="protein sequence ID" value="ENSP00000367629.4"/>
    <property type="gene ID" value="ENSG00000130762.15"/>
</dbReference>
<dbReference type="GeneID" id="27237"/>
<dbReference type="KEGG" id="hsa:27237"/>
<dbReference type="MANE-Select" id="ENST00000378378.9">
    <property type="protein sequence ID" value="ENSP00000367629.4"/>
    <property type="RefSeq nucleotide sequence ID" value="NM_014448.4"/>
    <property type="RefSeq protein sequence ID" value="NP_055263.2"/>
</dbReference>
<dbReference type="UCSC" id="uc001akg.5">
    <molecule id="Q5VV41-1"/>
    <property type="organism name" value="human"/>
</dbReference>
<dbReference type="AGR" id="HGNC:15515"/>
<dbReference type="CTD" id="27237"/>
<dbReference type="DisGeNET" id="27237"/>
<dbReference type="GeneCards" id="ARHGEF16"/>
<dbReference type="HGNC" id="HGNC:15515">
    <property type="gene designation" value="ARHGEF16"/>
</dbReference>
<dbReference type="HPA" id="ENSG00000130762">
    <property type="expression patterns" value="Tissue enhanced (intestine)"/>
</dbReference>
<dbReference type="MIM" id="618871">
    <property type="type" value="gene"/>
</dbReference>
<dbReference type="neXtProt" id="NX_Q5VV41"/>
<dbReference type="OpenTargets" id="ENSG00000130762"/>
<dbReference type="PharmGKB" id="PA24971"/>
<dbReference type="VEuPathDB" id="HostDB:ENSG00000130762"/>
<dbReference type="eggNOG" id="KOG3523">
    <property type="taxonomic scope" value="Eukaryota"/>
</dbReference>
<dbReference type="GeneTree" id="ENSGT01030000234571"/>
<dbReference type="HOGENOM" id="CLU_012820_2_1_1"/>
<dbReference type="InParanoid" id="Q5VV41"/>
<dbReference type="OMA" id="FHPYVVY"/>
<dbReference type="OrthoDB" id="27593at2759"/>
<dbReference type="PAN-GO" id="Q5VV41">
    <property type="GO annotations" value="1 GO annotation based on evolutionary models"/>
</dbReference>
<dbReference type="PhylomeDB" id="Q5VV41"/>
<dbReference type="TreeFam" id="TF316357"/>
<dbReference type="PathwayCommons" id="Q5VV41"/>
<dbReference type="Reactome" id="R-HSA-193648">
    <property type="pathway name" value="NRAGE signals death through JNK"/>
</dbReference>
<dbReference type="Reactome" id="R-HSA-416482">
    <property type="pathway name" value="G alpha (12/13) signalling events"/>
</dbReference>
<dbReference type="Reactome" id="R-HSA-9013148">
    <property type="pathway name" value="CDC42 GTPase cycle"/>
</dbReference>
<dbReference type="Reactome" id="R-HSA-9013408">
    <property type="pathway name" value="RHOG GTPase cycle"/>
</dbReference>
<dbReference type="SignaLink" id="Q5VV41"/>
<dbReference type="BioGRID-ORCS" id="27237">
    <property type="hits" value="13 hits in 1146 CRISPR screens"/>
</dbReference>
<dbReference type="ChiTaRS" id="ARHGEF16">
    <property type="organism name" value="human"/>
</dbReference>
<dbReference type="EvolutionaryTrace" id="Q5VV41"/>
<dbReference type="GenomeRNAi" id="27237"/>
<dbReference type="Pharos" id="Q5VV41">
    <property type="development level" value="Tbio"/>
</dbReference>
<dbReference type="PRO" id="PR:Q5VV41"/>
<dbReference type="Proteomes" id="UP000005640">
    <property type="component" value="Chromosome 1"/>
</dbReference>
<dbReference type="RNAct" id="Q5VV41">
    <property type="molecule type" value="protein"/>
</dbReference>
<dbReference type="Bgee" id="ENSG00000130762">
    <property type="expression patterns" value="Expressed in mucosa of transverse colon and 145 other cell types or tissues"/>
</dbReference>
<dbReference type="ExpressionAtlas" id="Q5VV41">
    <property type="expression patterns" value="baseline and differential"/>
</dbReference>
<dbReference type="GO" id="GO:0005829">
    <property type="term" value="C:cytosol"/>
    <property type="evidence" value="ECO:0000304"/>
    <property type="project" value="Reactome"/>
</dbReference>
<dbReference type="GO" id="GO:0045296">
    <property type="term" value="F:cadherin binding"/>
    <property type="evidence" value="ECO:0007005"/>
    <property type="project" value="BHF-UCL"/>
</dbReference>
<dbReference type="GO" id="GO:0005096">
    <property type="term" value="F:GTPase activator activity"/>
    <property type="evidence" value="ECO:0000314"/>
    <property type="project" value="BHF-UCL"/>
</dbReference>
<dbReference type="GO" id="GO:0005085">
    <property type="term" value="F:guanyl-nucleotide exchange factor activity"/>
    <property type="evidence" value="ECO:0000314"/>
    <property type="project" value="UniProtKB"/>
</dbReference>
<dbReference type="GO" id="GO:0030165">
    <property type="term" value="F:PDZ domain binding"/>
    <property type="evidence" value="ECO:0000353"/>
    <property type="project" value="BHF-UCL"/>
</dbReference>
<dbReference type="GO" id="GO:0030971">
    <property type="term" value="F:receptor tyrosine kinase binding"/>
    <property type="evidence" value="ECO:0000353"/>
    <property type="project" value="UniProtKB"/>
</dbReference>
<dbReference type="GO" id="GO:0031267">
    <property type="term" value="F:small GTPase binding"/>
    <property type="evidence" value="ECO:0000353"/>
    <property type="project" value="UniProtKB"/>
</dbReference>
<dbReference type="GO" id="GO:0090630">
    <property type="term" value="P:activation of GTPase activity"/>
    <property type="evidence" value="ECO:0000315"/>
    <property type="project" value="UniProtKB"/>
</dbReference>
<dbReference type="GO" id="GO:0060326">
    <property type="term" value="P:cell chemotaxis"/>
    <property type="evidence" value="ECO:0000315"/>
    <property type="project" value="UniProtKB"/>
</dbReference>
<dbReference type="GO" id="GO:1903078">
    <property type="term" value="P:positive regulation of protein localization to plasma membrane"/>
    <property type="evidence" value="ECO:0000315"/>
    <property type="project" value="UniProtKB"/>
</dbReference>
<dbReference type="GO" id="GO:0032956">
    <property type="term" value="P:regulation of actin cytoskeleton organization"/>
    <property type="evidence" value="ECO:0000318"/>
    <property type="project" value="GO_Central"/>
</dbReference>
<dbReference type="GO" id="GO:0032489">
    <property type="term" value="P:regulation of Cdc42 protein signal transduction"/>
    <property type="evidence" value="ECO:0000314"/>
    <property type="project" value="BHF-UCL"/>
</dbReference>
<dbReference type="CDD" id="cd01221">
    <property type="entry name" value="PH_ephexin"/>
    <property type="match status" value="1"/>
</dbReference>
<dbReference type="CDD" id="cd00160">
    <property type="entry name" value="RhoGEF"/>
    <property type="match status" value="1"/>
</dbReference>
<dbReference type="CDD" id="cd11938">
    <property type="entry name" value="SH3_ARHGEF16_26"/>
    <property type="match status" value="1"/>
</dbReference>
<dbReference type="FunFam" id="2.30.29.30:FF:000127">
    <property type="entry name" value="Neuronal guanine nucleotide exchange factor"/>
    <property type="match status" value="1"/>
</dbReference>
<dbReference type="FunFam" id="1.20.900.10:FF:000007">
    <property type="entry name" value="rho guanine nucleotide exchange factor 19"/>
    <property type="match status" value="1"/>
</dbReference>
<dbReference type="FunFam" id="2.30.30.40:FF:000153">
    <property type="entry name" value="rho guanine nucleotide exchange factor 26"/>
    <property type="match status" value="1"/>
</dbReference>
<dbReference type="Gene3D" id="1.20.900.10">
    <property type="entry name" value="Dbl homology (DH) domain"/>
    <property type="match status" value="1"/>
</dbReference>
<dbReference type="Gene3D" id="2.30.29.30">
    <property type="entry name" value="Pleckstrin-homology domain (PH domain)/Phosphotyrosine-binding domain (PTB)"/>
    <property type="match status" value="1"/>
</dbReference>
<dbReference type="Gene3D" id="2.30.30.40">
    <property type="entry name" value="SH3 Domains"/>
    <property type="match status" value="1"/>
</dbReference>
<dbReference type="InterPro" id="IPR035797">
    <property type="entry name" value="ARHGEF16/ARHGEF26_SH3"/>
</dbReference>
<dbReference type="InterPro" id="IPR035899">
    <property type="entry name" value="DBL_dom_sf"/>
</dbReference>
<dbReference type="InterPro" id="IPR000219">
    <property type="entry name" value="DH_dom"/>
</dbReference>
<dbReference type="InterPro" id="IPR047271">
    <property type="entry name" value="Ephexin-like"/>
</dbReference>
<dbReference type="InterPro" id="IPR011993">
    <property type="entry name" value="PH-like_dom_sf"/>
</dbReference>
<dbReference type="InterPro" id="IPR001849">
    <property type="entry name" value="PH_domain"/>
</dbReference>
<dbReference type="InterPro" id="IPR047270">
    <property type="entry name" value="PH_ephexin"/>
</dbReference>
<dbReference type="InterPro" id="IPR036028">
    <property type="entry name" value="SH3-like_dom_sf"/>
</dbReference>
<dbReference type="InterPro" id="IPR001452">
    <property type="entry name" value="SH3_domain"/>
</dbReference>
<dbReference type="PANTHER" id="PTHR12845">
    <property type="entry name" value="GUANINE NUCLEOTIDE EXCHANGE FACTOR"/>
    <property type="match status" value="1"/>
</dbReference>
<dbReference type="PANTHER" id="PTHR12845:SF3">
    <property type="entry name" value="RHO GUANINE NUCLEOTIDE EXCHANGE FACTOR 16"/>
    <property type="match status" value="1"/>
</dbReference>
<dbReference type="Pfam" id="PF00169">
    <property type="entry name" value="PH"/>
    <property type="match status" value="1"/>
</dbReference>
<dbReference type="Pfam" id="PF00621">
    <property type="entry name" value="RhoGEF"/>
    <property type="match status" value="1"/>
</dbReference>
<dbReference type="Pfam" id="PF00018">
    <property type="entry name" value="SH3_1"/>
    <property type="match status" value="1"/>
</dbReference>
<dbReference type="SMART" id="SM00233">
    <property type="entry name" value="PH"/>
    <property type="match status" value="1"/>
</dbReference>
<dbReference type="SMART" id="SM00325">
    <property type="entry name" value="RhoGEF"/>
    <property type="match status" value="1"/>
</dbReference>
<dbReference type="SMART" id="SM00326">
    <property type="entry name" value="SH3"/>
    <property type="match status" value="1"/>
</dbReference>
<dbReference type="SUPFAM" id="SSF48065">
    <property type="entry name" value="DBL homology domain (DH-domain)"/>
    <property type="match status" value="1"/>
</dbReference>
<dbReference type="SUPFAM" id="SSF50729">
    <property type="entry name" value="PH domain-like"/>
    <property type="match status" value="1"/>
</dbReference>
<dbReference type="SUPFAM" id="SSF50044">
    <property type="entry name" value="SH3-domain"/>
    <property type="match status" value="1"/>
</dbReference>
<dbReference type="PROSITE" id="PS50010">
    <property type="entry name" value="DH_2"/>
    <property type="match status" value="1"/>
</dbReference>
<dbReference type="PROSITE" id="PS50003">
    <property type="entry name" value="PH_DOMAIN"/>
    <property type="match status" value="1"/>
</dbReference>
<dbReference type="PROSITE" id="PS50002">
    <property type="entry name" value="SH3"/>
    <property type="match status" value="1"/>
</dbReference>
<feature type="initiator methionine" description="Removed" evidence="19">
    <location>
        <position position="1"/>
    </location>
</feature>
<feature type="chain" id="PRO_0000233690" description="Rho guanine nucleotide exchange factor 16">
    <location>
        <begin position="2"/>
        <end position="709"/>
    </location>
</feature>
<feature type="domain" description="DH" evidence="2">
    <location>
        <begin position="284"/>
        <end position="468"/>
    </location>
</feature>
<feature type="domain" description="PH" evidence="3">
    <location>
        <begin position="501"/>
        <end position="620"/>
    </location>
</feature>
<feature type="domain" description="SH3" evidence="4">
    <location>
        <begin position="629"/>
        <end position="689"/>
    </location>
</feature>
<feature type="region of interest" description="Disordered" evidence="5">
    <location>
        <begin position="22"/>
        <end position="70"/>
    </location>
</feature>
<feature type="region of interest" description="Disordered" evidence="5">
    <location>
        <begin position="114"/>
        <end position="146"/>
    </location>
</feature>
<feature type="region of interest" description="Disordered" evidence="5">
    <location>
        <begin position="180"/>
        <end position="246"/>
    </location>
</feature>
<feature type="region of interest" description="Required for RHOG activation and mediates interaction with EPHA2" evidence="7">
    <location>
        <begin position="275"/>
        <end position="481"/>
    </location>
</feature>
<feature type="short sequence motif" description="PDZ-binding motif">
    <location>
        <begin position="707"/>
        <end position="709"/>
    </location>
</feature>
<feature type="compositionally biased region" description="Basic residues" evidence="5">
    <location>
        <begin position="191"/>
        <end position="207"/>
    </location>
</feature>
<feature type="modified residue" description="N-acetylalanine" evidence="19">
    <location>
        <position position="2"/>
    </location>
</feature>
<feature type="modified residue" description="Phosphoserine" evidence="19">
    <location>
        <position position="6"/>
    </location>
</feature>
<feature type="modified residue" description="Phosphoserine" evidence="17 18">
    <location>
        <position position="41"/>
    </location>
</feature>
<feature type="modified residue" description="Phosphoserine" evidence="16 17 18 19 20">
    <location>
        <position position="107"/>
    </location>
</feature>
<feature type="modified residue" description="Phosphoserine" evidence="18 20">
    <location>
        <position position="174"/>
    </location>
</feature>
<feature type="modified residue" description="Phosphoserine" evidence="18 20">
    <location>
        <position position="191"/>
    </location>
</feature>
<feature type="modified residue" description="Phosphoserine" evidence="17 19 20">
    <location>
        <position position="208"/>
    </location>
</feature>
<feature type="modified residue" description="Phosphothreonine" evidence="1">
    <location>
        <position position="226"/>
    </location>
</feature>
<feature type="modified residue" description="Phosphoserine" evidence="17">
    <location>
        <position position="227"/>
    </location>
</feature>
<feature type="modified residue" description="Phosphoserine" evidence="17 19">
    <location>
        <position position="230"/>
    </location>
</feature>
<feature type="modified residue" description="Phosphoserine" evidence="17">
    <location>
        <position position="240"/>
    </location>
</feature>
<feature type="splice variant" id="VSP_018149" description="In isoform 2." evidence="12 13 14">
    <location>
        <begin position="1"/>
        <end position="288"/>
    </location>
</feature>
<feature type="sequence variant" id="VAR_083184" description="In dbSNP:rs562018000." evidence="9">
    <original>R</original>
    <variation>W</variation>
    <location>
        <position position="24"/>
    </location>
</feature>
<feature type="sequence variant" id="VAR_059796" description="In dbSNP:rs3806164.">
    <original>V</original>
    <variation>M</variation>
    <location>
        <position position="137"/>
    </location>
</feature>
<feature type="sequence variant" id="VAR_059797" description="In dbSNP:rs2185639." evidence="6 10 11">
    <original>H</original>
    <variation>Y</variation>
    <location>
        <position position="370"/>
    </location>
</feature>
<feature type="sequence variant" id="VAR_061796" description="In dbSNP:rs56309807.">
    <original>E</original>
    <variation>K</variation>
    <location>
        <position position="681"/>
    </location>
</feature>
<feature type="sequence conflict" description="In Ref. 4; AAH02681." evidence="15" ref="4">
    <original>AM</original>
    <variation>RG</variation>
    <location>
        <begin position="157"/>
        <end position="158"/>
    </location>
</feature>
<feature type="strand" evidence="21">
    <location>
        <begin position="633"/>
        <end position="638"/>
    </location>
</feature>
<feature type="strand" evidence="21">
    <location>
        <begin position="644"/>
        <end position="647"/>
    </location>
</feature>
<feature type="strand" evidence="21">
    <location>
        <begin position="654"/>
        <end position="662"/>
    </location>
</feature>
<feature type="strand" evidence="21">
    <location>
        <begin position="665"/>
        <end position="670"/>
    </location>
</feature>
<feature type="turn" evidence="21">
    <location>
        <begin position="671"/>
        <end position="673"/>
    </location>
</feature>
<feature type="strand" evidence="21">
    <location>
        <begin position="676"/>
        <end position="679"/>
    </location>
</feature>
<feature type="helix" evidence="21">
    <location>
        <begin position="681"/>
        <end position="683"/>
    </location>
</feature>
<feature type="strand" evidence="21">
    <location>
        <begin position="685"/>
        <end position="687"/>
    </location>
</feature>
<comment type="function">
    <text evidence="7">Guanyl-nucleotide exchange factor of the RHOG GTPase stimulating the exchange of RHOG-associated GDP for GTP. May play a role in chemotactic cell migration by mediating the activation of RAC1 by EPHA2. May also activate CDC42 and mediate activation of CDC42 by the viral protein HPV16 E6.</text>
</comment>
<comment type="subunit">
    <text evidence="7 8">Interacts with ELMO2, EPHA2, RAC1 and RHOG; mediates activation of RAC1 by EPHA2. Interacts with TAX1BP3 (via PDZ domain). May interact with CDC42; stimulated by HPV16 E6.</text>
</comment>
<comment type="interaction">
    <interactant intactId="EBI-1057448">
        <id>Q5VV41</id>
    </interactant>
    <interactant intactId="EBI-11983447">
        <id>Q8N9W6-4</id>
        <label>BOLL</label>
    </interactant>
    <organismsDiffer>false</organismsDiffer>
    <experiments>3</experiments>
</comment>
<comment type="interaction">
    <interactant intactId="EBI-1057448">
        <id>Q5VV41</id>
    </interactant>
    <interactant intactId="EBI-357481">
        <id>Q12959</id>
        <label>DLG1</label>
    </interactant>
    <organismsDiffer>false</organismsDiffer>
    <experiments>3</experiments>
</comment>
<comment type="interaction">
    <interactant intactId="EBI-1057448">
        <id>Q5VV41</id>
    </interactant>
    <interactant intactId="EBI-351590">
        <id>P31943</id>
        <label>HNRNPH1</label>
    </interactant>
    <organismsDiffer>false</organismsDiffer>
    <experiments>3</experiments>
</comment>
<comment type="interaction">
    <interactant intactId="EBI-1057448">
        <id>Q5VV41</id>
    </interactant>
    <interactant intactId="EBI-9088686">
        <id>Q14847-2</id>
        <label>LASP1</label>
    </interactant>
    <organismsDiffer>false</organismsDiffer>
    <experiments>3</experiments>
</comment>
<comment type="interaction">
    <interactant intactId="EBI-1057448">
        <id>Q5VV41</id>
    </interactant>
    <interactant intactId="EBI-716006">
        <id>Q9Y5V3</id>
        <label>MAGED1</label>
    </interactant>
    <organismsDiffer>false</organismsDiffer>
    <experiments>3</experiments>
</comment>
<comment type="interaction">
    <interactant intactId="EBI-1057448">
        <id>Q5VV41</id>
    </interactant>
    <interactant intactId="EBI-741424">
        <id>Q8NDC0</id>
        <label>MAPK1IP1L</label>
    </interactant>
    <organismsDiffer>false</organismsDiffer>
    <experiments>3</experiments>
</comment>
<comment type="interaction">
    <interactant intactId="EBI-1057448">
        <id>Q5VV41</id>
    </interactant>
    <interactant intactId="EBI-357345">
        <id>Q14160</id>
        <label>SCRIB</label>
    </interactant>
    <organismsDiffer>false</organismsDiffer>
    <experiments>2</experiments>
</comment>
<comment type="interaction">
    <interactant intactId="EBI-1057448">
        <id>Q5VV41</id>
    </interactant>
    <interactant intactId="EBI-476295">
        <id>P31947</id>
        <label>SFN</label>
    </interactant>
    <organismsDiffer>false</organismsDiffer>
    <experiments>5</experiments>
</comment>
<comment type="interaction">
    <interactant intactId="EBI-1057448">
        <id>Q5VV41</id>
    </interactant>
    <interactant intactId="EBI-10246902">
        <id>Q05BK6</id>
        <label>TFG</label>
    </interactant>
    <organismsDiffer>false</organismsDiffer>
    <experiments>3</experiments>
</comment>
<comment type="interaction">
    <interactant intactId="EBI-1057448">
        <id>Q5VV41</id>
    </interactant>
    <interactant intactId="EBI-357061">
        <id>Q92734</id>
        <label>TFG</label>
    </interactant>
    <organismsDiffer>false</organismsDiffer>
    <experiments>3</experiments>
</comment>
<comment type="interaction">
    <interactant intactId="EBI-1057448">
        <id>Q5VV41</id>
    </interactant>
    <interactant intactId="EBI-356498">
        <id>P62258</id>
        <label>YWHAE</label>
    </interactant>
    <organismsDiffer>false</organismsDiffer>
    <experiments>4</experiments>
</comment>
<comment type="interaction">
    <interactant intactId="EBI-1057448">
        <id>Q5VV41</id>
    </interactant>
    <interactant intactId="EBI-347088">
        <id>P63104</id>
        <label>YWHAZ</label>
    </interactant>
    <organismsDiffer>false</organismsDiffer>
    <experiments>4</experiments>
</comment>
<comment type="subcellular location">
    <subcellularLocation>
        <location evidence="15">Cytoplasm</location>
    </subcellularLocation>
</comment>
<comment type="alternative products">
    <event type="alternative splicing"/>
    <isoform>
        <id>Q5VV41-1</id>
        <name>1</name>
        <sequence type="displayed"/>
    </isoform>
    <isoform>
        <id>Q5VV41-2</id>
        <name>2</name>
        <sequence type="described" ref="VSP_018149"/>
    </isoform>
</comment>
<comment type="induction">
    <text evidence="8">Up-regulated by HPV16 E6 (at protein level).</text>
</comment>
<comment type="domain">
    <text>The PDZ-binding motif mediates interaction with TAX1BP3.</text>
</comment>
<comment type="sequence caution" evidence="15">
    <conflict type="erroneous initiation">
        <sequence resource="EMBL-CDS" id="AAH02681"/>
    </conflict>
    <text>Truncated N-terminus.</text>
</comment>
<reference key="1">
    <citation type="submission" date="1996-11" db="EMBL/GenBank/DDBJ databases">
        <title>Isolation and characterization of a candidate gene for human neuroblastoma mapped to 1p36.3, NBR: a new member of the Rho/Rac GEF family.</title>
        <authorList>
            <person name="Sasaki S."/>
            <person name="Takei Y."/>
            <person name="Ito M."/>
            <person name="Nakagawara A."/>
            <person name="Fujiwara T."/>
            <person name="Takahashi E."/>
            <person name="Muto T."/>
            <person name="Tokino T."/>
            <person name="Nakamura Y."/>
        </authorList>
    </citation>
    <scope>NUCLEOTIDE SEQUENCE [MRNA] (ISOFORM 2)</scope>
    <scope>VARIANT TYR-370</scope>
</reference>
<reference key="2">
    <citation type="submission" date="2003-05" db="EMBL/GenBank/DDBJ databases">
        <title>Cloning of human full-length CDSs in BD Creator(TM) system donor vector.</title>
        <authorList>
            <person name="Kalnine N."/>
            <person name="Chen X."/>
            <person name="Rolfs A."/>
            <person name="Halleck A."/>
            <person name="Hines L."/>
            <person name="Eisenstein S."/>
            <person name="Koundinya M."/>
            <person name="Raphael J."/>
            <person name="Moreira D."/>
            <person name="Kelley T."/>
            <person name="LaBaer J."/>
            <person name="Lin Y."/>
            <person name="Phelan M."/>
            <person name="Farmer A."/>
        </authorList>
    </citation>
    <scope>NUCLEOTIDE SEQUENCE [LARGE SCALE MRNA] (ISOFORM 2)</scope>
    <scope>VARIANT TYR-370</scope>
</reference>
<reference key="3">
    <citation type="journal article" date="2006" name="Nature">
        <title>The DNA sequence and biological annotation of human chromosome 1.</title>
        <authorList>
            <person name="Gregory S.G."/>
            <person name="Barlow K.F."/>
            <person name="McLay K.E."/>
            <person name="Kaul R."/>
            <person name="Swarbreck D."/>
            <person name="Dunham A."/>
            <person name="Scott C.E."/>
            <person name="Howe K.L."/>
            <person name="Woodfine K."/>
            <person name="Spencer C.C.A."/>
            <person name="Jones M.C."/>
            <person name="Gillson C."/>
            <person name="Searle S."/>
            <person name="Zhou Y."/>
            <person name="Kokocinski F."/>
            <person name="McDonald L."/>
            <person name="Evans R."/>
            <person name="Phillips K."/>
            <person name="Atkinson A."/>
            <person name="Cooper R."/>
            <person name="Jones C."/>
            <person name="Hall R.E."/>
            <person name="Andrews T.D."/>
            <person name="Lloyd C."/>
            <person name="Ainscough R."/>
            <person name="Almeida J.P."/>
            <person name="Ambrose K.D."/>
            <person name="Anderson F."/>
            <person name="Andrew R.W."/>
            <person name="Ashwell R.I.S."/>
            <person name="Aubin K."/>
            <person name="Babbage A.K."/>
            <person name="Bagguley C.L."/>
            <person name="Bailey J."/>
            <person name="Beasley H."/>
            <person name="Bethel G."/>
            <person name="Bird C.P."/>
            <person name="Bray-Allen S."/>
            <person name="Brown J.Y."/>
            <person name="Brown A.J."/>
            <person name="Buckley D."/>
            <person name="Burton J."/>
            <person name="Bye J."/>
            <person name="Carder C."/>
            <person name="Chapman J.C."/>
            <person name="Clark S.Y."/>
            <person name="Clarke G."/>
            <person name="Clee C."/>
            <person name="Cobley V."/>
            <person name="Collier R.E."/>
            <person name="Corby N."/>
            <person name="Coville G.J."/>
            <person name="Davies J."/>
            <person name="Deadman R."/>
            <person name="Dunn M."/>
            <person name="Earthrowl M."/>
            <person name="Ellington A.G."/>
            <person name="Errington H."/>
            <person name="Frankish A."/>
            <person name="Frankland J."/>
            <person name="French L."/>
            <person name="Garner P."/>
            <person name="Garnett J."/>
            <person name="Gay L."/>
            <person name="Ghori M.R.J."/>
            <person name="Gibson R."/>
            <person name="Gilby L.M."/>
            <person name="Gillett W."/>
            <person name="Glithero R.J."/>
            <person name="Grafham D.V."/>
            <person name="Griffiths C."/>
            <person name="Griffiths-Jones S."/>
            <person name="Grocock R."/>
            <person name="Hammond S."/>
            <person name="Harrison E.S.I."/>
            <person name="Hart E."/>
            <person name="Haugen E."/>
            <person name="Heath P.D."/>
            <person name="Holmes S."/>
            <person name="Holt K."/>
            <person name="Howden P.J."/>
            <person name="Hunt A.R."/>
            <person name="Hunt S.E."/>
            <person name="Hunter G."/>
            <person name="Isherwood J."/>
            <person name="James R."/>
            <person name="Johnson C."/>
            <person name="Johnson D."/>
            <person name="Joy A."/>
            <person name="Kay M."/>
            <person name="Kershaw J.K."/>
            <person name="Kibukawa M."/>
            <person name="Kimberley A.M."/>
            <person name="King A."/>
            <person name="Knights A.J."/>
            <person name="Lad H."/>
            <person name="Laird G."/>
            <person name="Lawlor S."/>
            <person name="Leongamornlert D.A."/>
            <person name="Lloyd D.M."/>
            <person name="Loveland J."/>
            <person name="Lovell J."/>
            <person name="Lush M.J."/>
            <person name="Lyne R."/>
            <person name="Martin S."/>
            <person name="Mashreghi-Mohammadi M."/>
            <person name="Matthews L."/>
            <person name="Matthews N.S.W."/>
            <person name="McLaren S."/>
            <person name="Milne S."/>
            <person name="Mistry S."/>
            <person name="Moore M.J.F."/>
            <person name="Nickerson T."/>
            <person name="O'Dell C.N."/>
            <person name="Oliver K."/>
            <person name="Palmeiri A."/>
            <person name="Palmer S.A."/>
            <person name="Parker A."/>
            <person name="Patel D."/>
            <person name="Pearce A.V."/>
            <person name="Peck A.I."/>
            <person name="Pelan S."/>
            <person name="Phelps K."/>
            <person name="Phillimore B.J."/>
            <person name="Plumb R."/>
            <person name="Rajan J."/>
            <person name="Raymond C."/>
            <person name="Rouse G."/>
            <person name="Saenphimmachak C."/>
            <person name="Sehra H.K."/>
            <person name="Sheridan E."/>
            <person name="Shownkeen R."/>
            <person name="Sims S."/>
            <person name="Skuce C.D."/>
            <person name="Smith M."/>
            <person name="Steward C."/>
            <person name="Subramanian S."/>
            <person name="Sycamore N."/>
            <person name="Tracey A."/>
            <person name="Tromans A."/>
            <person name="Van Helmond Z."/>
            <person name="Wall M."/>
            <person name="Wallis J.M."/>
            <person name="White S."/>
            <person name="Whitehead S.L."/>
            <person name="Wilkinson J.E."/>
            <person name="Willey D.L."/>
            <person name="Williams H."/>
            <person name="Wilming L."/>
            <person name="Wray P.W."/>
            <person name="Wu Z."/>
            <person name="Coulson A."/>
            <person name="Vaudin M."/>
            <person name="Sulston J.E."/>
            <person name="Durbin R.M."/>
            <person name="Hubbard T."/>
            <person name="Wooster R."/>
            <person name="Dunham I."/>
            <person name="Carter N.P."/>
            <person name="McVean G."/>
            <person name="Ross M.T."/>
            <person name="Harrow J."/>
            <person name="Olson M.V."/>
            <person name="Beck S."/>
            <person name="Rogers J."/>
            <person name="Bentley D.R."/>
        </authorList>
    </citation>
    <scope>NUCLEOTIDE SEQUENCE [LARGE SCALE GENOMIC DNA]</scope>
</reference>
<reference key="4">
    <citation type="journal article" date="2004" name="Genome Res.">
        <title>The status, quality, and expansion of the NIH full-length cDNA project: the Mammalian Gene Collection (MGC).</title>
        <authorList>
            <consortium name="The MGC Project Team"/>
        </authorList>
    </citation>
    <scope>NUCLEOTIDE SEQUENCE [LARGE SCALE MRNA] (ISOFORM 2)</scope>
    <scope>NUCLEOTIDE SEQUENCE [LARGE SCALE MRNA] OF 156-709</scope>
    <scope>VARIANT TYR-370</scope>
    <source>
        <tissue>PNS</tissue>
    </source>
</reference>
<reference key="5">
    <citation type="journal article" date="2008" name="J. Proteome Res.">
        <title>Combining protein-based IMAC, peptide-based IMAC, and MudPIT for efficient phosphoproteomic analysis.</title>
        <authorList>
            <person name="Cantin G.T."/>
            <person name="Yi W."/>
            <person name="Lu B."/>
            <person name="Park S.K."/>
            <person name="Xu T."/>
            <person name="Lee J.-D."/>
            <person name="Yates J.R. III"/>
        </authorList>
    </citation>
    <scope>PHOSPHORYLATION [LARGE SCALE ANALYSIS] AT SER-107</scope>
    <scope>IDENTIFICATION BY MASS SPECTROMETRY [LARGE SCALE ANALYSIS]</scope>
    <source>
        <tissue>Cervix carcinoma</tissue>
    </source>
</reference>
<reference key="6">
    <citation type="journal article" date="2008" name="Proc. Natl. Acad. Sci. U.S.A.">
        <title>A quantitative atlas of mitotic phosphorylation.</title>
        <authorList>
            <person name="Dephoure N."/>
            <person name="Zhou C."/>
            <person name="Villen J."/>
            <person name="Beausoleil S.A."/>
            <person name="Bakalarski C.E."/>
            <person name="Elledge S.J."/>
            <person name="Gygi S.P."/>
        </authorList>
    </citation>
    <scope>PHOSPHORYLATION [LARGE SCALE ANALYSIS] AT SER-41; SER-107; SER-208; SER-227; SER-230 AND SER-240</scope>
    <scope>IDENTIFICATION BY MASS SPECTROMETRY [LARGE SCALE ANALYSIS]</scope>
    <source>
        <tissue>Cervix carcinoma</tissue>
    </source>
</reference>
<reference key="7">
    <citation type="journal article" date="2009" name="Sci. Signal.">
        <title>Quantitative phosphoproteomic analysis of T cell receptor signaling reveals system-wide modulation of protein-protein interactions.</title>
        <authorList>
            <person name="Mayya V."/>
            <person name="Lundgren D.H."/>
            <person name="Hwang S.-I."/>
            <person name="Rezaul K."/>
            <person name="Wu L."/>
            <person name="Eng J.K."/>
            <person name="Rodionov V."/>
            <person name="Han D.K."/>
        </authorList>
    </citation>
    <scope>IDENTIFICATION BY MASS SPECTROMETRY [LARGE SCALE ANALYSIS]</scope>
    <source>
        <tissue>Leukemic T-cell</tissue>
    </source>
</reference>
<reference key="8">
    <citation type="journal article" date="2010" name="J. Cell Biol.">
        <title>Ephexin4 and EphA2 mediate cell migration through a RhoG-dependent mechanism.</title>
        <authorList>
            <person name="Hiramoto-Yamaki N."/>
            <person name="Takeuchi S."/>
            <person name="Ueda S."/>
            <person name="Harada K."/>
            <person name="Fujimoto S."/>
            <person name="Negishi M."/>
            <person name="Katoh H."/>
        </authorList>
    </citation>
    <scope>FUNCTION</scope>
    <scope>INTERACTION WITH ELMO2; EPHA2; RAC1 AND RHOG</scope>
</reference>
<reference key="9">
    <citation type="journal article" date="2010" name="Sci. Signal.">
        <title>Quantitative phosphoproteomics reveals widespread full phosphorylation site occupancy during mitosis.</title>
        <authorList>
            <person name="Olsen J.V."/>
            <person name="Vermeulen M."/>
            <person name="Santamaria A."/>
            <person name="Kumar C."/>
            <person name="Miller M.L."/>
            <person name="Jensen L.J."/>
            <person name="Gnad F."/>
            <person name="Cox J."/>
            <person name="Jensen T.S."/>
            <person name="Nigg E.A."/>
            <person name="Brunak S."/>
            <person name="Mann M."/>
        </authorList>
    </citation>
    <scope>PHOSPHORYLATION [LARGE SCALE ANALYSIS] AT SER-41; SER-107; SER-174 AND SER-191</scope>
    <scope>IDENTIFICATION BY MASS SPECTROMETRY [LARGE SCALE ANALYSIS]</scope>
    <source>
        <tissue>Cervix carcinoma</tissue>
    </source>
</reference>
<reference key="10">
    <citation type="journal article" date="2011" name="Br. J. Cancer">
        <title>The HPV16 E6 binding protein Tip-1 interacts with ARHGEF16, which activates Cdc42.</title>
        <authorList>
            <person name="Oliver A.W."/>
            <person name="He X."/>
            <person name="Borthwick K."/>
            <person name="Donne A.J."/>
            <person name="Hampson L."/>
            <person name="Hampson I.N."/>
        </authorList>
    </citation>
    <scope>INTERACTION WITH CDC42 AND TAX1BP3</scope>
    <scope>INDUCTION BY HPV16 E6</scope>
</reference>
<reference key="11">
    <citation type="journal article" date="2011" name="Sci. Signal.">
        <title>System-wide temporal characterization of the proteome and phosphoproteome of human embryonic stem cell differentiation.</title>
        <authorList>
            <person name="Rigbolt K.T."/>
            <person name="Prokhorova T.A."/>
            <person name="Akimov V."/>
            <person name="Henningsen J."/>
            <person name="Johansen P.T."/>
            <person name="Kratchmarova I."/>
            <person name="Kassem M."/>
            <person name="Mann M."/>
            <person name="Olsen J.V."/>
            <person name="Blagoev B."/>
        </authorList>
    </citation>
    <scope>ACETYLATION [LARGE SCALE ANALYSIS] AT ALA-2</scope>
    <scope>PHOSPHORYLATION [LARGE SCALE ANALYSIS] AT SER-6; SER-107; SER-208 AND SER-230</scope>
    <scope>CLEAVAGE OF INITIATOR METHIONINE [LARGE SCALE ANALYSIS]</scope>
    <scope>IDENTIFICATION BY MASS SPECTROMETRY [LARGE SCALE ANALYSIS]</scope>
</reference>
<reference key="12">
    <citation type="journal article" date="2013" name="J. Proteome Res.">
        <title>Toward a comprehensive characterization of a human cancer cell phosphoproteome.</title>
        <authorList>
            <person name="Zhou H."/>
            <person name="Di Palma S."/>
            <person name="Preisinger C."/>
            <person name="Peng M."/>
            <person name="Polat A.N."/>
            <person name="Heck A.J."/>
            <person name="Mohammed S."/>
        </authorList>
    </citation>
    <scope>PHOSPHORYLATION [LARGE SCALE ANALYSIS] AT SER-107; SER-174; SER-191 AND SER-208</scope>
    <scope>IDENTIFICATION BY MASS SPECTROMETRY [LARGE SCALE ANALYSIS]</scope>
    <source>
        <tissue>Cervix carcinoma</tissue>
        <tissue>Erythroleukemia</tissue>
    </source>
</reference>
<reference key="13">
    <citation type="submission" date="2005-05" db="EMBL/GenBank/DDBJ databases">
        <title>Solution structures of the SH3 domain of human rho guanine exchange factor (GEF) 16.</title>
        <authorList>
            <consortium name="RIKEN structural genomics initiative (RSGI)"/>
        </authorList>
    </citation>
    <scope>STRUCTURE BY NMR OF 622-687</scope>
</reference>
<reference key="14">
    <citation type="journal article" date="2019" name="Genet. Med.">
        <title>Splice-altering variant in COL11A1 as a cause of nonsyndromic hearing loss DFNA37.</title>
        <authorList>
            <person name="Booth K.T."/>
            <person name="Askew J.W."/>
            <person name="Talebizadeh Z."/>
            <person name="Huygen P.L.M."/>
            <person name="Eudy J."/>
            <person name="Kenyon J."/>
            <person name="Hoover D."/>
            <person name="Hildebrand M.S."/>
            <person name="Smith K.R."/>
            <person name="Bahlo M."/>
            <person name="Kimberling W.J."/>
            <person name="Smith R.J.H."/>
            <person name="Azaiez H."/>
            <person name="Smith S.D."/>
        </authorList>
    </citation>
    <scope>VARIANT TRP-24</scope>
</reference>
<proteinExistence type="evidence at protein level"/>